<proteinExistence type="inferred from homology"/>
<evidence type="ECO:0000255" key="1">
    <source>
        <dbReference type="HAMAP-Rule" id="MF_00050"/>
    </source>
</evidence>
<name>EFTS_RHOP5</name>
<keyword id="KW-0963">Cytoplasm</keyword>
<keyword id="KW-0251">Elongation factor</keyword>
<keyword id="KW-0648">Protein biosynthesis</keyword>
<protein>
    <recommendedName>
        <fullName evidence="1">Elongation factor Ts</fullName>
        <shortName evidence="1">EF-Ts</shortName>
    </recommendedName>
</protein>
<comment type="function">
    <text evidence="1">Associates with the EF-Tu.GDP complex and induces the exchange of GDP to GTP. It remains bound to the aminoacyl-tRNA.EF-Tu.GTP complex up to the GTP hydrolysis stage on the ribosome.</text>
</comment>
<comment type="subcellular location">
    <subcellularLocation>
        <location evidence="1">Cytoplasm</location>
    </subcellularLocation>
</comment>
<comment type="similarity">
    <text evidence="1">Belongs to the EF-Ts family.</text>
</comment>
<feature type="chain" id="PRO_1000006160" description="Elongation factor Ts">
    <location>
        <begin position="1"/>
        <end position="307"/>
    </location>
</feature>
<feature type="region of interest" description="Involved in Mg(2+) ion dislocation from EF-Tu" evidence="1">
    <location>
        <begin position="80"/>
        <end position="83"/>
    </location>
</feature>
<organism>
    <name type="scientific">Rhodopseudomonas palustris (strain BisA53)</name>
    <dbReference type="NCBI Taxonomy" id="316055"/>
    <lineage>
        <taxon>Bacteria</taxon>
        <taxon>Pseudomonadati</taxon>
        <taxon>Pseudomonadota</taxon>
        <taxon>Alphaproteobacteria</taxon>
        <taxon>Hyphomicrobiales</taxon>
        <taxon>Nitrobacteraceae</taxon>
        <taxon>Rhodopseudomonas</taxon>
    </lineage>
</organism>
<gene>
    <name evidence="1" type="primary">tsf</name>
    <name type="ordered locus">RPE_2554</name>
</gene>
<dbReference type="EMBL" id="CP000463">
    <property type="protein sequence ID" value="ABJ06492.1"/>
    <property type="molecule type" value="Genomic_DNA"/>
</dbReference>
<dbReference type="SMR" id="Q07NJ2"/>
<dbReference type="STRING" id="316055.RPE_2554"/>
<dbReference type="KEGG" id="rpe:RPE_2554"/>
<dbReference type="eggNOG" id="COG0264">
    <property type="taxonomic scope" value="Bacteria"/>
</dbReference>
<dbReference type="HOGENOM" id="CLU_047155_2_0_5"/>
<dbReference type="OrthoDB" id="9808348at2"/>
<dbReference type="GO" id="GO:0005737">
    <property type="term" value="C:cytoplasm"/>
    <property type="evidence" value="ECO:0007669"/>
    <property type="project" value="UniProtKB-SubCell"/>
</dbReference>
<dbReference type="GO" id="GO:0003746">
    <property type="term" value="F:translation elongation factor activity"/>
    <property type="evidence" value="ECO:0007669"/>
    <property type="project" value="UniProtKB-UniRule"/>
</dbReference>
<dbReference type="CDD" id="cd14275">
    <property type="entry name" value="UBA_EF-Ts"/>
    <property type="match status" value="1"/>
</dbReference>
<dbReference type="FunFam" id="1.10.8.10:FF:000001">
    <property type="entry name" value="Elongation factor Ts"/>
    <property type="match status" value="1"/>
</dbReference>
<dbReference type="Gene3D" id="1.10.286.20">
    <property type="match status" value="1"/>
</dbReference>
<dbReference type="Gene3D" id="1.10.8.10">
    <property type="entry name" value="DNA helicase RuvA subunit, C-terminal domain"/>
    <property type="match status" value="1"/>
</dbReference>
<dbReference type="Gene3D" id="3.30.479.20">
    <property type="entry name" value="Elongation factor Ts, dimerisation domain"/>
    <property type="match status" value="2"/>
</dbReference>
<dbReference type="HAMAP" id="MF_00050">
    <property type="entry name" value="EF_Ts"/>
    <property type="match status" value="1"/>
</dbReference>
<dbReference type="InterPro" id="IPR036402">
    <property type="entry name" value="EF-Ts_dimer_sf"/>
</dbReference>
<dbReference type="InterPro" id="IPR001816">
    <property type="entry name" value="Transl_elong_EFTs/EF1B"/>
</dbReference>
<dbReference type="InterPro" id="IPR014039">
    <property type="entry name" value="Transl_elong_EFTs/EF1B_dimer"/>
</dbReference>
<dbReference type="InterPro" id="IPR018101">
    <property type="entry name" value="Transl_elong_Ts_CS"/>
</dbReference>
<dbReference type="InterPro" id="IPR009060">
    <property type="entry name" value="UBA-like_sf"/>
</dbReference>
<dbReference type="NCBIfam" id="TIGR00116">
    <property type="entry name" value="tsf"/>
    <property type="match status" value="1"/>
</dbReference>
<dbReference type="PANTHER" id="PTHR11741">
    <property type="entry name" value="ELONGATION FACTOR TS"/>
    <property type="match status" value="1"/>
</dbReference>
<dbReference type="PANTHER" id="PTHR11741:SF0">
    <property type="entry name" value="ELONGATION FACTOR TS, MITOCHONDRIAL"/>
    <property type="match status" value="1"/>
</dbReference>
<dbReference type="Pfam" id="PF00889">
    <property type="entry name" value="EF_TS"/>
    <property type="match status" value="1"/>
</dbReference>
<dbReference type="SUPFAM" id="SSF54713">
    <property type="entry name" value="Elongation factor Ts (EF-Ts), dimerisation domain"/>
    <property type="match status" value="2"/>
</dbReference>
<dbReference type="SUPFAM" id="SSF46934">
    <property type="entry name" value="UBA-like"/>
    <property type="match status" value="1"/>
</dbReference>
<dbReference type="PROSITE" id="PS01126">
    <property type="entry name" value="EF_TS_1"/>
    <property type="match status" value="1"/>
</dbReference>
<dbReference type="PROSITE" id="PS01127">
    <property type="entry name" value="EF_TS_2"/>
    <property type="match status" value="1"/>
</dbReference>
<accession>Q07NJ2</accession>
<reference key="1">
    <citation type="submission" date="2006-09" db="EMBL/GenBank/DDBJ databases">
        <title>Complete sequence of Rhodopseudomonas palustris BisA53.</title>
        <authorList>
            <consortium name="US DOE Joint Genome Institute"/>
            <person name="Copeland A."/>
            <person name="Lucas S."/>
            <person name="Lapidus A."/>
            <person name="Barry K."/>
            <person name="Detter J.C."/>
            <person name="Glavina del Rio T."/>
            <person name="Hammon N."/>
            <person name="Israni S."/>
            <person name="Dalin E."/>
            <person name="Tice H."/>
            <person name="Pitluck S."/>
            <person name="Chain P."/>
            <person name="Malfatti S."/>
            <person name="Shin M."/>
            <person name="Vergez L."/>
            <person name="Schmutz J."/>
            <person name="Larimer F."/>
            <person name="Land M."/>
            <person name="Hauser L."/>
            <person name="Pelletier D.A."/>
            <person name="Kyrpides N."/>
            <person name="Kim E."/>
            <person name="Harwood C.S."/>
            <person name="Oda Y."/>
            <person name="Richardson P."/>
        </authorList>
    </citation>
    <scope>NUCLEOTIDE SEQUENCE [LARGE SCALE GENOMIC DNA]</scope>
    <source>
        <strain>BisA53</strain>
    </source>
</reference>
<sequence length="307" mass="32249">MATITAGMVKELRETTGVGMMDCKQALSENDGNMEAAIDWLRKKGLSKAAKKAGRVAAEGLIGALTDGKKGVVVEVNSETDFVARNEQFQGLVKMIAQVALKVGDDIDAINAAPVGSVTVATAIADAIATIGENMTLRRAKLLSVENGVVASYVHGAVVEGAGKLGVLVALESTGKTDELALLGRQIAMHVAAANPQALDAASLDPELIRREKDVMADKYRQQGKPEAMIEKIVENGLKTFYKEVCLLEQAFIHDTGKSVAQAVKEAEGKVGAPIKVAAFVRYALGEGIEKQTSDFAAEVAAVSGQK</sequence>